<comment type="subunit">
    <text evidence="1">Component of the small ribosomal subunit. Mature ribosomes consist of a small (40S) and a large (60S) subunit. The 40S subunit contains about 33 different proteins and 1 molecule of RNA (18S). The 60S subunit contains about 49 different proteins and 3 molecules of RNA (25S, 5.8S and 5S).</text>
</comment>
<comment type="subcellular location">
    <subcellularLocation>
        <location evidence="1">Cytoplasm</location>
    </subcellularLocation>
</comment>
<comment type="similarity">
    <text evidence="1">Belongs to the eukaryotic ribosomal protein eS1 family.</text>
</comment>
<evidence type="ECO:0000255" key="1">
    <source>
        <dbReference type="HAMAP-Rule" id="MF_03122"/>
    </source>
</evidence>
<evidence type="ECO:0000256" key="2">
    <source>
        <dbReference type="SAM" id="MobiDB-lite"/>
    </source>
</evidence>
<evidence type="ECO:0000305" key="3"/>
<organism>
    <name type="scientific">Aspergillus terreus (strain NIH 2624 / FGSC A1156)</name>
    <dbReference type="NCBI Taxonomy" id="341663"/>
    <lineage>
        <taxon>Eukaryota</taxon>
        <taxon>Fungi</taxon>
        <taxon>Dikarya</taxon>
        <taxon>Ascomycota</taxon>
        <taxon>Pezizomycotina</taxon>
        <taxon>Eurotiomycetes</taxon>
        <taxon>Eurotiomycetidae</taxon>
        <taxon>Eurotiales</taxon>
        <taxon>Aspergillaceae</taxon>
        <taxon>Aspergillus</taxon>
        <taxon>Aspergillus subgen. Circumdati</taxon>
    </lineage>
</organism>
<reference key="1">
    <citation type="submission" date="2005-09" db="EMBL/GenBank/DDBJ databases">
        <title>Annotation of the Aspergillus terreus NIH2624 genome.</title>
        <authorList>
            <person name="Birren B.W."/>
            <person name="Lander E.S."/>
            <person name="Galagan J.E."/>
            <person name="Nusbaum C."/>
            <person name="Devon K."/>
            <person name="Henn M."/>
            <person name="Ma L.-J."/>
            <person name="Jaffe D.B."/>
            <person name="Butler J."/>
            <person name="Alvarez P."/>
            <person name="Gnerre S."/>
            <person name="Grabherr M."/>
            <person name="Kleber M."/>
            <person name="Mauceli E.W."/>
            <person name="Brockman W."/>
            <person name="Rounsley S."/>
            <person name="Young S.K."/>
            <person name="LaButti K."/>
            <person name="Pushparaj V."/>
            <person name="DeCaprio D."/>
            <person name="Crawford M."/>
            <person name="Koehrsen M."/>
            <person name="Engels R."/>
            <person name="Montgomery P."/>
            <person name="Pearson M."/>
            <person name="Howarth C."/>
            <person name="Larson L."/>
            <person name="Luoma S."/>
            <person name="White J."/>
            <person name="Alvarado L."/>
            <person name="Kodira C.D."/>
            <person name="Zeng Q."/>
            <person name="Oleary S."/>
            <person name="Yandava C."/>
            <person name="Denning D.W."/>
            <person name="Nierman W.C."/>
            <person name="Milne T."/>
            <person name="Madden K."/>
        </authorList>
    </citation>
    <scope>NUCLEOTIDE SEQUENCE [LARGE SCALE GENOMIC DNA]</scope>
    <source>
        <strain>NIH 2624 / FGSC A1156</strain>
    </source>
</reference>
<feature type="initiator methionine" description="Removed" evidence="1">
    <location>
        <position position="1"/>
    </location>
</feature>
<feature type="chain" id="PRO_0000389362" description="Small ribosomal subunit protein eS1">
    <location>
        <begin position="2"/>
        <end position="256"/>
    </location>
</feature>
<feature type="region of interest" description="Disordered" evidence="2">
    <location>
        <begin position="1"/>
        <end position="20"/>
    </location>
</feature>
<feature type="compositionally biased region" description="Basic residues" evidence="2">
    <location>
        <begin position="1"/>
        <end position="18"/>
    </location>
</feature>
<feature type="modified residue" description="N-acetylalanine; partial" evidence="1">
    <location>
        <position position="2"/>
    </location>
</feature>
<accession>Q0CA00</accession>
<gene>
    <name type="primary">rps1</name>
    <name type="ORF">ATEG_09484</name>
</gene>
<dbReference type="EMBL" id="CH476607">
    <property type="protein sequence ID" value="EAU30621.1"/>
    <property type="molecule type" value="Genomic_DNA"/>
</dbReference>
<dbReference type="RefSeq" id="XP_001218106.1">
    <property type="nucleotide sequence ID" value="XM_001218105.1"/>
</dbReference>
<dbReference type="SMR" id="Q0CA00"/>
<dbReference type="STRING" id="341663.Q0CA00"/>
<dbReference type="EnsemblFungi" id="EAU30621">
    <property type="protein sequence ID" value="EAU30621"/>
    <property type="gene ID" value="ATEG_09484"/>
</dbReference>
<dbReference type="GeneID" id="4353661"/>
<dbReference type="VEuPathDB" id="FungiDB:ATEG_09484"/>
<dbReference type="eggNOG" id="KOG1628">
    <property type="taxonomic scope" value="Eukaryota"/>
</dbReference>
<dbReference type="HOGENOM" id="CLU_062507_0_0_1"/>
<dbReference type="OMA" id="TRFKGHE"/>
<dbReference type="OrthoDB" id="9834376at2759"/>
<dbReference type="Proteomes" id="UP000007963">
    <property type="component" value="Unassembled WGS sequence"/>
</dbReference>
<dbReference type="GO" id="GO:0022627">
    <property type="term" value="C:cytosolic small ribosomal subunit"/>
    <property type="evidence" value="ECO:0007669"/>
    <property type="project" value="UniProtKB-UniRule"/>
</dbReference>
<dbReference type="GO" id="GO:0003735">
    <property type="term" value="F:structural constituent of ribosome"/>
    <property type="evidence" value="ECO:0007669"/>
    <property type="project" value="UniProtKB-UniRule"/>
</dbReference>
<dbReference type="GO" id="GO:0006412">
    <property type="term" value="P:translation"/>
    <property type="evidence" value="ECO:0007669"/>
    <property type="project" value="UniProtKB-UniRule"/>
</dbReference>
<dbReference type="HAMAP" id="MF_03122">
    <property type="entry name" value="Ribosomal_eS1_euk"/>
    <property type="match status" value="1"/>
</dbReference>
<dbReference type="InterPro" id="IPR001593">
    <property type="entry name" value="Ribosomal_eS1"/>
</dbReference>
<dbReference type="InterPro" id="IPR018281">
    <property type="entry name" value="Ribosomal_eS1_CS"/>
</dbReference>
<dbReference type="InterPro" id="IPR027500">
    <property type="entry name" value="Ribosomal_eS1_euk"/>
</dbReference>
<dbReference type="PANTHER" id="PTHR11830">
    <property type="entry name" value="40S RIBOSOMAL PROTEIN S3A"/>
    <property type="match status" value="1"/>
</dbReference>
<dbReference type="Pfam" id="PF01015">
    <property type="entry name" value="Ribosomal_S3Ae"/>
    <property type="match status" value="1"/>
</dbReference>
<dbReference type="SMART" id="SM01397">
    <property type="entry name" value="Ribosomal_S3Ae"/>
    <property type="match status" value="1"/>
</dbReference>
<dbReference type="PROSITE" id="PS01191">
    <property type="entry name" value="RIBOSOMAL_S3AE"/>
    <property type="match status" value="1"/>
</dbReference>
<name>RS3A_ASPTN</name>
<proteinExistence type="inferred from homology"/>
<keyword id="KW-0007">Acetylation</keyword>
<keyword id="KW-0963">Cytoplasm</keyword>
<keyword id="KW-1185">Reference proteome</keyword>
<keyword id="KW-0687">Ribonucleoprotein</keyword>
<keyword id="KW-0689">Ribosomal protein</keyword>
<protein>
    <recommendedName>
        <fullName evidence="1">Small ribosomal subunit protein eS1</fullName>
    </recommendedName>
    <alternativeName>
        <fullName evidence="3">40S ribosomal protein S1</fullName>
    </alternativeName>
</protein>
<sequence>MAVGKNKRLSKGKKGIKKRTVDPFSRKDEYSVKAPSTFQIRDVGKTLVNRTSGLKNANDSLKGRIFEVSLADLQNDEDHAFRKVKLRVDEIQGKNCLTNFHGLDFTTDKLRSLVRKWQSLIEANVTVKTTDDYLLRLFAIAFTKRRPNQIKKTTYARSSQIRAIRKKMTEIMQREAASCSLAQLTTKLIPEVIGREIEKATQGIYPLQNVHIRKVKLLKSPKFDLGALLNLHGESTTDDKGHKVEREFKEQVLESV</sequence>